<comment type="function">
    <text evidence="3 4">Nonribosomal peptide synthetase; part of the gene cluster that mediates the biosynthesis of the phytotoxin tentoxin, an inhibitor the F1-ATPase activity of chloroplasts, resulting in chlorosis in sensitive plants (PubMed:27490569, PubMed:7881545). Tentoxin is a cyclic tetrapeptide that consists of four amino acid residues: glycine (Gly), alanine (Ala), leucine (Leu), and dehydrophenylalanine (DPhe) (PubMed:27490569, PubMed:7881545). In addition, both the Ala and DPhe residues are N-methylated (PubMed:27490569, PubMed:7881545). The nonribosomal peptide synthetase TES assembles tentoxin from the four substrate amino acids (PubMed:27490569). The adenylation domains of each of the 4 modules are responsible for the activation of Gly, Ala, Leu and DPhe, respectively (PubMed:27490569). In addition, the N-methyltransferase domains in the second and fourth modules of TES could be responsible for N-methylation of Ala and DPhe residues (PubMed:27490569). Finally, the condensation domain located in the termination module probably catalyzes the formation of the intramolecular macrocyclization and then the release of tentoxin (PubMed:27490569). The cytochrome P450 monooxygenase TES1 is predicted to be involved in the formation of DPhe (PubMed:27490569).</text>
</comment>
<comment type="pathway">
    <text evidence="3">Phytotoxin biosynthesis.</text>
</comment>
<comment type="domain">
    <text evidence="3">NRP synthetases are composed of discrete domains (adenylation (A), thiolation (T) or peptidyl carrier protein (PCP) and condensation (C) domains) which when grouped together are referred to as a single module (PubMed:27490569). Each module is responsible for the recognition (via the A domain) and incorporation of a single amino acid into the growing peptide product (PubMed:27490569). Thus, an NRP synthetase is generally composed of one or more modules and can terminate in a thioesterase domain (TE) that releases the newly synthesized peptide from the enzyme (PubMed:27490569). Occasionally, methyltransferase domains (responsible for amino acid methylation) are present within the NRP synthetase (PubMed:27490569). TES has the following architecture:A-T-C-A-M-T-C-A-T-C-A-M-T-C (PubMed:27490569).</text>
</comment>
<comment type="disruption phenotype">
    <text evidence="3">Impairs the production of tentoxin (PubMed:27490569).</text>
</comment>
<comment type="similarity">
    <text evidence="6">Belongs to the NRP synthetase family.</text>
</comment>
<dbReference type="EC" id="6.3.2.-" evidence="7"/>
<dbReference type="EMBL" id="KT947104">
    <property type="protein sequence ID" value="AMT84997.1"/>
    <property type="molecule type" value="Genomic_DNA"/>
</dbReference>
<dbReference type="SMR" id="A0A144KPJ6"/>
<dbReference type="VEuPathDB" id="FungiDB:CC77DRAFT_1065195"/>
<dbReference type="GO" id="GO:0005737">
    <property type="term" value="C:cytoplasm"/>
    <property type="evidence" value="ECO:0007669"/>
    <property type="project" value="TreeGrafter"/>
</dbReference>
<dbReference type="GO" id="GO:0016853">
    <property type="term" value="F:isomerase activity"/>
    <property type="evidence" value="ECO:0007669"/>
    <property type="project" value="UniProtKB-KW"/>
</dbReference>
<dbReference type="GO" id="GO:0016874">
    <property type="term" value="F:ligase activity"/>
    <property type="evidence" value="ECO:0007669"/>
    <property type="project" value="UniProtKB-KW"/>
</dbReference>
<dbReference type="GO" id="GO:0031177">
    <property type="term" value="F:phosphopantetheine binding"/>
    <property type="evidence" value="ECO:0007669"/>
    <property type="project" value="InterPro"/>
</dbReference>
<dbReference type="GO" id="GO:0043041">
    <property type="term" value="P:amino acid activation for nonribosomal peptide biosynthetic process"/>
    <property type="evidence" value="ECO:0007669"/>
    <property type="project" value="TreeGrafter"/>
</dbReference>
<dbReference type="GO" id="GO:0009403">
    <property type="term" value="P:toxin biosynthetic process"/>
    <property type="evidence" value="ECO:0007669"/>
    <property type="project" value="UniProtKB-ARBA"/>
</dbReference>
<dbReference type="CDD" id="cd05930">
    <property type="entry name" value="A_NRPS"/>
    <property type="match status" value="2"/>
</dbReference>
<dbReference type="CDD" id="cd05918">
    <property type="entry name" value="A_NRPS_SidN3_like"/>
    <property type="match status" value="2"/>
</dbReference>
<dbReference type="CDD" id="cd02440">
    <property type="entry name" value="AdoMet_MTases"/>
    <property type="match status" value="2"/>
</dbReference>
<dbReference type="CDD" id="cd19542">
    <property type="entry name" value="CT_NRPS-like"/>
    <property type="match status" value="1"/>
</dbReference>
<dbReference type="CDD" id="cd19545">
    <property type="entry name" value="FUM14_C_NRPS-like"/>
    <property type="match status" value="1"/>
</dbReference>
<dbReference type="CDD" id="cd19531">
    <property type="entry name" value="LCL_NRPS-like"/>
    <property type="match status" value="2"/>
</dbReference>
<dbReference type="FunFam" id="3.30.300.30:FF:000084">
    <property type="entry name" value="Enniatin synthase"/>
    <property type="match status" value="2"/>
</dbReference>
<dbReference type="FunFam" id="3.40.50.980:FF:000001">
    <property type="entry name" value="Non-ribosomal peptide synthetase"/>
    <property type="match status" value="2"/>
</dbReference>
<dbReference type="FunFam" id="3.30.300.30:FF:000015">
    <property type="entry name" value="Nonribosomal peptide synthase SidD"/>
    <property type="match status" value="2"/>
</dbReference>
<dbReference type="FunFam" id="3.30.559.30:FF:000003">
    <property type="entry name" value="Nonribosomal peptide synthase SidD"/>
    <property type="match status" value="1"/>
</dbReference>
<dbReference type="FunFam" id="1.10.1200.10:FF:000005">
    <property type="entry name" value="Nonribosomal peptide synthetase 1"/>
    <property type="match status" value="3"/>
</dbReference>
<dbReference type="FunFam" id="3.40.50.12780:FF:000014">
    <property type="entry name" value="Nonribosomal peptide synthetase 1"/>
    <property type="match status" value="2"/>
</dbReference>
<dbReference type="Gene3D" id="3.30.300.30">
    <property type="match status" value="6"/>
</dbReference>
<dbReference type="Gene3D" id="3.40.50.980">
    <property type="match status" value="6"/>
</dbReference>
<dbReference type="Gene3D" id="1.10.1200.10">
    <property type="entry name" value="ACP-like"/>
    <property type="match status" value="4"/>
</dbReference>
<dbReference type="Gene3D" id="3.30.559.10">
    <property type="entry name" value="Chloramphenicol acetyltransferase-like domain"/>
    <property type="match status" value="4"/>
</dbReference>
<dbReference type="Gene3D" id="2.30.38.10">
    <property type="entry name" value="Luciferase, Domain 3"/>
    <property type="match status" value="3"/>
</dbReference>
<dbReference type="Gene3D" id="3.40.50.12780">
    <property type="entry name" value="N-terminal domain of ligase-like"/>
    <property type="match status" value="1"/>
</dbReference>
<dbReference type="Gene3D" id="3.30.559.30">
    <property type="entry name" value="Nonribosomal peptide synthetase, condensation domain"/>
    <property type="match status" value="4"/>
</dbReference>
<dbReference type="Gene3D" id="3.40.50.150">
    <property type="entry name" value="Vaccinia Virus protein VP39"/>
    <property type="match status" value="2"/>
</dbReference>
<dbReference type="InterPro" id="IPR010071">
    <property type="entry name" value="AA_adenyl_dom"/>
</dbReference>
<dbReference type="InterPro" id="IPR036736">
    <property type="entry name" value="ACP-like_sf"/>
</dbReference>
<dbReference type="InterPro" id="IPR045851">
    <property type="entry name" value="AMP-bd_C_sf"/>
</dbReference>
<dbReference type="InterPro" id="IPR020845">
    <property type="entry name" value="AMP-binding_CS"/>
</dbReference>
<dbReference type="InterPro" id="IPR000873">
    <property type="entry name" value="AMP-dep_synth/lig_dom"/>
</dbReference>
<dbReference type="InterPro" id="IPR042099">
    <property type="entry name" value="ANL_N_sf"/>
</dbReference>
<dbReference type="InterPro" id="IPR023213">
    <property type="entry name" value="CAT-like_dom_sf"/>
</dbReference>
<dbReference type="InterPro" id="IPR001242">
    <property type="entry name" value="Condensatn"/>
</dbReference>
<dbReference type="InterPro" id="IPR013217">
    <property type="entry name" value="Methyltransf_12"/>
</dbReference>
<dbReference type="InterPro" id="IPR020806">
    <property type="entry name" value="PKS_PP-bd"/>
</dbReference>
<dbReference type="InterPro" id="IPR009081">
    <property type="entry name" value="PP-bd_ACP"/>
</dbReference>
<dbReference type="InterPro" id="IPR006162">
    <property type="entry name" value="Ppantetheine_attach_site"/>
</dbReference>
<dbReference type="InterPro" id="IPR029063">
    <property type="entry name" value="SAM-dependent_MTases_sf"/>
</dbReference>
<dbReference type="NCBIfam" id="TIGR01733">
    <property type="entry name" value="AA-adenyl-dom"/>
    <property type="match status" value="4"/>
</dbReference>
<dbReference type="NCBIfam" id="NF003417">
    <property type="entry name" value="PRK04813.1"/>
    <property type="match status" value="6"/>
</dbReference>
<dbReference type="PANTHER" id="PTHR45527:SF1">
    <property type="entry name" value="FATTY ACID SYNTHASE"/>
    <property type="match status" value="1"/>
</dbReference>
<dbReference type="PANTHER" id="PTHR45527">
    <property type="entry name" value="NONRIBOSOMAL PEPTIDE SYNTHETASE"/>
    <property type="match status" value="1"/>
</dbReference>
<dbReference type="Pfam" id="PF00501">
    <property type="entry name" value="AMP-binding"/>
    <property type="match status" value="4"/>
</dbReference>
<dbReference type="Pfam" id="PF00668">
    <property type="entry name" value="Condensation"/>
    <property type="match status" value="4"/>
</dbReference>
<dbReference type="Pfam" id="PF08242">
    <property type="entry name" value="Methyltransf_12"/>
    <property type="match status" value="1"/>
</dbReference>
<dbReference type="Pfam" id="PF00550">
    <property type="entry name" value="PP-binding"/>
    <property type="match status" value="4"/>
</dbReference>
<dbReference type="SMART" id="SM00823">
    <property type="entry name" value="PKS_PP"/>
    <property type="match status" value="4"/>
</dbReference>
<dbReference type="SUPFAM" id="SSF56801">
    <property type="entry name" value="Acetyl-CoA synthetase-like"/>
    <property type="match status" value="4"/>
</dbReference>
<dbReference type="SUPFAM" id="SSF47336">
    <property type="entry name" value="ACP-like"/>
    <property type="match status" value="4"/>
</dbReference>
<dbReference type="SUPFAM" id="SSF52777">
    <property type="entry name" value="CoA-dependent acyltransferases"/>
    <property type="match status" value="8"/>
</dbReference>
<dbReference type="SUPFAM" id="SSF53335">
    <property type="entry name" value="S-adenosyl-L-methionine-dependent methyltransferases"/>
    <property type="match status" value="2"/>
</dbReference>
<dbReference type="PROSITE" id="PS00455">
    <property type="entry name" value="AMP_BINDING"/>
    <property type="match status" value="4"/>
</dbReference>
<dbReference type="PROSITE" id="PS50075">
    <property type="entry name" value="CARRIER"/>
    <property type="match status" value="4"/>
</dbReference>
<dbReference type="PROSITE" id="PS00886">
    <property type="entry name" value="ILVD_EDD_1"/>
    <property type="match status" value="1"/>
</dbReference>
<dbReference type="PROSITE" id="PS00012">
    <property type="entry name" value="PHOSPHOPANTETHEINE"/>
    <property type="match status" value="4"/>
</dbReference>
<protein>
    <recommendedName>
        <fullName evidence="5">Nonribosomal peptide synthetase TES</fullName>
        <ecNumber evidence="7">6.3.2.-</ecNumber>
    </recommendedName>
    <alternativeName>
        <fullName evidence="5">Tentoxin synthase</fullName>
        <shortName evidence="5">TES</shortName>
    </alternativeName>
</protein>
<evidence type="ECO:0000255" key="1"/>
<evidence type="ECO:0000255" key="2">
    <source>
        <dbReference type="PROSITE-ProRule" id="PRU00258"/>
    </source>
</evidence>
<evidence type="ECO:0000269" key="3">
    <source>
    </source>
</evidence>
<evidence type="ECO:0000269" key="4">
    <source>
    </source>
</evidence>
<evidence type="ECO:0000303" key="5">
    <source>
    </source>
</evidence>
<evidence type="ECO:0000305" key="6"/>
<evidence type="ECO:0000305" key="7">
    <source>
    </source>
</evidence>
<gene>
    <name evidence="5" type="primary">TES</name>
</gene>
<organism>
    <name type="scientific">Alternaria alternata</name>
    <name type="common">Alternaria rot fungus</name>
    <name type="synonym">Torula alternata</name>
    <dbReference type="NCBI Taxonomy" id="5599"/>
    <lineage>
        <taxon>Eukaryota</taxon>
        <taxon>Fungi</taxon>
        <taxon>Dikarya</taxon>
        <taxon>Ascomycota</taxon>
        <taxon>Pezizomycotina</taxon>
        <taxon>Dothideomycetes</taxon>
        <taxon>Pleosporomycetidae</taxon>
        <taxon>Pleosporales</taxon>
        <taxon>Pleosporineae</taxon>
        <taxon>Pleosporaceae</taxon>
        <taxon>Alternaria</taxon>
        <taxon>Alternaria sect. Alternaria</taxon>
        <taxon>Alternaria alternata complex</taxon>
    </lineage>
</organism>
<feature type="chain" id="PRO_0000438987" description="Nonribosomal peptide synthetase TES">
    <location>
        <begin position="1"/>
        <end position="5161"/>
    </location>
</feature>
<feature type="domain" description="Carrier 1" evidence="2 7">
    <location>
        <begin position="569"/>
        <end position="645"/>
    </location>
</feature>
<feature type="domain" description="Carrier 2" evidence="2 7">
    <location>
        <begin position="2068"/>
        <end position="2141"/>
    </location>
</feature>
<feature type="domain" description="Carrier 3" evidence="2 7">
    <location>
        <begin position="3139"/>
        <end position="3215"/>
    </location>
</feature>
<feature type="domain" description="Carrier 4" evidence="2 7">
    <location>
        <begin position="4643"/>
        <end position="4725"/>
    </location>
</feature>
<feature type="region of interest" description="Adenylation 1" evidence="1 7">
    <location>
        <begin position="37"/>
        <end position="436"/>
    </location>
</feature>
<feature type="region of interest" description="Condensation 1" evidence="1 7">
    <location>
        <begin position="659"/>
        <end position="1098"/>
    </location>
</feature>
<feature type="region of interest" description="Adenylation 2" evidence="1 7">
    <location>
        <begin position="1122"/>
        <end position="1522"/>
    </location>
</feature>
<feature type="region of interest" description="Methyltransferase (M) domain 1" evidence="1 7">
    <location>
        <begin position="1630"/>
        <end position="1742"/>
    </location>
</feature>
<feature type="region of interest" description="Condensation 2" evidence="1 7">
    <location>
        <begin position="2179"/>
        <end position="2593"/>
    </location>
</feature>
<feature type="region of interest" description="Adenylation 3" evidence="1 7">
    <location>
        <begin position="2614"/>
        <end position="3010"/>
    </location>
</feature>
<feature type="region of interest" description="Condensation 3" evidence="1 7">
    <location>
        <begin position="3232"/>
        <end position="3668"/>
    </location>
</feature>
<feature type="region of interest" description="Adenylation 4" evidence="1 7">
    <location>
        <begin position="3694"/>
        <end position="4098"/>
    </location>
</feature>
<feature type="region of interest" description="Methyltransferase (M) domain 2" evidence="1 7">
    <location>
        <begin position="4203"/>
        <end position="4329"/>
    </location>
</feature>
<feature type="region of interest" description="Condensation 4" evidence="1 7">
    <location>
        <begin position="4785"/>
        <end position="5093"/>
    </location>
</feature>
<feature type="modified residue" description="O-(pantetheine 4'-phosphoryl)serine" evidence="2">
    <location>
        <position position="606"/>
    </location>
</feature>
<feature type="modified residue" description="O-(pantetheine 4'-phosphoryl)serine" evidence="2">
    <location>
        <position position="2102"/>
    </location>
</feature>
<feature type="modified residue" description="O-(pantetheine 4'-phosphoryl)serine" evidence="2">
    <location>
        <position position="3176"/>
    </location>
</feature>
<feature type="modified residue" description="O-(pantetheine 4'-phosphoryl)serine" evidence="2">
    <location>
        <position position="4680"/>
    </location>
</feature>
<accession>A0A144KPJ6</accession>
<reference key="1">
    <citation type="journal article" date="2016" name="Toxins">
        <title>Putative nonribosomal peptide synthetase and cytochrome P450 genes responsible for tentoxin biosynthesis in Alternaria alternata ZJ33.</title>
        <authorList>
            <person name="Li Y.H."/>
            <person name="Han W.J."/>
            <person name="Gui X.W."/>
            <person name="Wei T."/>
            <person name="Tang S.Y."/>
            <person name="Jin J.M."/>
        </authorList>
    </citation>
    <scope>NUCLEOTIDE SEQUENCE [GENOMIC DNA]</scope>
    <scope>FUNCTION</scope>
    <scope>DISRUPTION PHENOTYPE</scope>
    <scope>DOMAIN</scope>
    <scope>PATHWAY</scope>
    <source>
        <strain>ZJ33</strain>
    </source>
</reference>
<reference key="2">
    <citation type="journal article" date="1994" name="Microbiology">
        <title>Studies of the biosynthesis of tentoxin by Alternaria alternata.</title>
        <authorList>
            <person name="Ramm K."/>
            <person name="Ramm M."/>
            <person name="Liebermann B."/>
            <person name="Reuter G."/>
        </authorList>
    </citation>
    <scope>FUNCTION</scope>
</reference>
<sequence>MPGSLLFDVNKLDVEKIWERNRGPLRAVNRCVHSLYEEQAIARPNACAIHAWDGNMTYEQLNQHSTRLASYLVTQGIGTEVMVPLCFEKSIWAIVAMLAVLKAGAAFVPLDPMHPRARHEEIFKQTNAKLVLTSVQHAALWPNSGLQFLAIDKTFVDQLPWETKIRSKVKPIDAVYVMFTSGSTGVPKGVVLEHRAIATSCLAHGMEMKLGSDSRALQFAAYTFDICIAEIFTTLIFGGCVCVPSEDDRRNALSEVINNNNINWAQLTPTVARLLDPSTVPSLRVLVLGGERVDEADWKRWGDDIVKVNVYGPTECSIWCTSYSNTDREFRSGTIGTSMASFSWVTDPEDHNKLVPFGTIGELLIEGPILARGYLNDISKTEAVFVDGPLWLRQGNRNDESTRRQGRLYKTGDLVYYDADGNLVYAGRKDSQTKVRGQRIELGEIEHHLNQCMSGIKQVAAEVILPSGDQAKAMVAAFVQLSEEPRHALVQQTSNGDLEVRVIFPTYLDELLVQCLPKDMVPEVYFAVAELPLTTSAKVDRQKLRKIGASFSAQQLAQLRTYSDDPKRQPETEKEQILHHLWAQVLSIDASSIGMDDSFFDLGGDSIAAMKLVGEARRSGIYITVAVVFQNPTLDKLTSAAIPSVDVSNTTIPPVGHDGHVAQSFAQGRMWFLEELHPGLTWYLMPVVVRMRGPLELTALQSALNAIESRHETLRTTFETIGDTSMQLVHPYHAKELSIIDIDIKSLEEVLHRDQISPFDLRKEAGLRVSIYRIGSEEHVLSVIMHHIISDGWSTDVFTRELGAFYSASIRGHDPLVQVQPLPIQYRDFSVWQRQQAQIDKHRSQLNYWFNVLNTSRPAELLCDKARPAALSGEASKQTIQIDGPLYIQLLQFCKAKGVTKFMVLFAAFRATHFRLTGQNDATIGTVNANRDRWELKDMIGFFVNLQCLRTTIDADESFEELVQQVYEATIASLANADVPFENIVSKLKNSRDLSRHPLVQLVFAMHSQRNLGQLKLEGLETESLDNAPKSRFDLEFHFFQQEDSLKGEVVYSTDIYSPEAIDNMLSIFQIVLEGCLQEPKAAIASLSLLCDVELSKLNSMGLIQVEKTDYPRESSVVDLFRQQTSLCPSRIAVKDASVTMTYTQLDKESDILAQWLAKQSLAPETLVSVLAGRSCQTIVAFLAILKAGLAYLPFDVRVPAKRMSTILGSLSGPKFVLLGEDVQPPYVDISDIRFIRITEALDEQTHEGSASRDIVKPTANSLAYVMFTSGSTGQPKGAMIEHRGIVRLVRDNNFVQHLPASPVMAHMTNLAFDVSTWEIYASLLQGGTLVCIDRLTVLDPEAVLRTFRQEHVSTAFMTPSLFRTYVQQLPALFAGLDMLCVGGEALHSNDILSMTTLRTGKIINGYGPTENTTFNTTFVLSREGQYPNGVPIGRALSNSGAYVMDLKQQLVPLGVVGELVVTGDGLARGYTDLERNIYRFITVQIGGEVVKAYRTGDSVRYRPADGQLEYFGRMDGQVKIRGHRIELGEIEHVLRSHGSVREAVAVVQQQQNADEAARLAAFVTVYEGDELVEEKPSGIDESEHVDVWEDQFDSKVYTPISKVLPEAIGRDFIGWTSMYDGSAIDKVEMNEWLDDTIDTMLNGHPPGKVLEVGTGTGMVLFNLGDGLESYVGLDPSSRAVEFVKDTVRSVPTLADKVRVYKATATEIDRLEPIDASLIVINSVIQYFPSLEYLFKTTQQLLGLESVSTIFFGDVRSYALHREFLATRAMFMAGDSADRAEVSRMITDMELVEKELLVDPAFFTALPERLPDQVEHVEILPKKMKATNELSCYRYAAVIHVKPRDGRKQEQRIRHVGHDEWIDFREHKLDRQSLLAQLQSNPRPSTMAVSNIPYSKTIVSRCLIESIDNAVAELSDPQDWYSSVCQRAQCSSSMSATDLYELAKEANCRVEVSWSRQHSQCGGIDAIFHRYPPRGGENRVMFQFPTDHAERPLHTLSSMPLRQQTLQRIQGQLQEMLDAQLPAYMVPQTVTFLETMPTNQNGKIDRNALTQRTEIQVAKGQEFQRELTRAESKIQQLIARVLRIDSDRIGLDDSFFQLGGDSIAAMKLVALARDEDIRLTVAKIFQYPKLIQLAAVAQEHVYVPNDNIVPFSLLDDEVDATQTHHEVAVKCAIDRGIIEDIYPCSPLQEGLMSLTVKRPGDYIMQTVLELREEVDETAFKIAWEKTVQSFQILRTRIVIHETLGLLQAVIAEKIKWADADDLATYLARDKLSSMQLGKPLARYGLVRDTRREKKWFVWTIHHAIYDGWALNHISVLCKQHTMAGKPGKQVGFNSFIKYLRQMDEDALAEYRRTTLSDCDANVFPPLVSGVQQPVADATAEYCCPPLPKRTSNTTISTLVRAAWAIVASGYTSSDDVVFGATVTGRNAPVAGIESLVGPVIATVPVRIRLQRDSTILEFLETVQKQATEMIPFEQTGLQRIAKLGPDTEHACNFQTLLIVQPAEDAFQSDDMFGTWEFGSGLQDFTTYGLMVQCKLAKEGVKITASFDARLVEQWQVERMLGQLSFVMQQLARGDSRTRVMDIGMLTQDDEQQLWMWNQRLPPAIDRCVHDLYSDQAKSRPEADAICAWDGVMTYKELDERSSRLATYLVDIGVKPETIVPLCFEKSMWMVVAMLAVLKAGGAFAPLDPSHPVSRHRDIFTQTKANMMLTSSQYANLWSEYIPTVVEITGHFIDQLTTNPYSTETAVQPGNTAYVIFTSGSTGVPKGVQMEHKAVSTSCSCQGPALGITEDTRVLQFAAYTFDACILEIITTLLHGACICIPSETQRRDHLVNTINTMKVTWALLTPAVARILDPQKIVSLKTLVLGGEKVNGSDCDTWSGRVRLINAYGPTECCVSCVASPDMKGLDPEPIGKPIASIGWVTNPNDHNRLAPLGAVGELLVEGPNLARGYLDDAKKTETAFVHDPLWLLRGCEGYSGRRGRLYKTGDLVYHTSDGDLVYVGRKDGQVKVRGQRIELAEIEICLYQHISDIKEIAVELISPTGGKPMIAAFLKANPELLNDKLSDGDSGVYVVYPARVDNELSQRLPRNMVPEVYFALTEFPISTSGKINRRRLREIGGSFSTDQLARLRTQKNESSDRKPETKHEMALQKLWAQVLNIEATSIGLNDSFFQLGGDSISAMKLVSEARNVDLVFSVQDVFQVQRLGRLANRLVDPPTSSHSAITKIDHQRPVLQSFAQGRLWFLEQLHPGLDWYLMHLAVRIKGPVQLPALQAALQAIEHRHETLRTTFSTNNGESLQEVHPFCGGRELNVIDVGSNDDKILLEALERDQKTPFNLRYEPGWRISIYRINDVSHVLSIVMHHIVSDGWSVDVLKKELSALYASAIRNEDPIFCLPPLPIQYRDFSVWQRLPEQAQEHRRQLDYWINQLDGSRPAEFLYDKPRPTTLSGKAGTQRLNISHKLYNRLQIFARQRGMTPFVVLLAVFRATHYRLTNQDDATIAVPNANRSRPELGDLIGFFVNIQCMRMKIQDETFEELLQHAYKTVVDSLANQDVPFESIVSALQGDRDSSRNPLAQVAFAVHSQQDIGKLDFEGVGTEAIEGLATSRFDLEFHFFQEKNGFQGYIYFSEELFVPETIYSLASVFTSILDNCLDKPETQIAVVPLMTVEAHTQLDQMGLLRMHQTAYPRNSSIVDVFRQQAAMQPSRVAVKDTSTDLTYAQLDSQSEKLAKFLATKSFAPETAVGVLAHRCCQAIVAFIGILKAGLAYLPFDHKAPEKRMESIFSTIEGNKLVLIGPNISLPGTGPKDVEFAYIPDILDADEDFEFTRSELDPTLRPTASSLAYILFTSGSTGQPKGVMVEHRGIVRLAQHDQMEHFKSSGAMAHMANLAFDGSSWEIYTCLLNGGTLVCIDATTVLDQDALLRAFTESQIRIAFITPALLNYILAESPDTIGNLDTLLVAGDRADVDDVFRARDLVRNKVVANAYGPTENSVMSTLYILSEDENCVNGVPIGRPISNSAAYVMDPEQNLVPLGVFGELVVTGDGVARGYTDPRRNVDRFVTVTIGHQTMRAYRTGDYVRQRPRDGEMEFFGRIDGQVKIRGNRVELGEIETVLRGHGLVRDAVVVAEQRKDKNQRLFGYITLKEDFEMLSAQNSDDDQIQHVNAWEHRFNTETYAQIVGIQSETVGQDFIGWTSMYDGTDIDKTEMKEWLEETIGSIHDKVGGQLGNVLEIGSGSGMILFNLGDSLKHYTGFEPSRKAVEFVTGTARSIPSLANKVEMYKATAADISKVDQPLQADLVVLNSVVQYFPSQGYLFNVVRDLLKVDGVKTLFFGDIRSYALRREFYAARALFMAGERASQKDLRRLVEDMEQIEQELLVDPGFFTSLTHRLPDLVQHVEIQPKRMRATNELSSYRYTAVVYSRSREPPCGGLRTIPDNEWIDFQEQGLNNDSLQQRIKDVSSTHPLAVSNISHTKTLFGNCLLGALGDGKARKPVHTDWTAHINRQAKGIPSLSAVDLDEMAKAAGCQVRISWNRQYSQHGGLDAIFYPRQINGGSDKAGVMFSFPTDHAERRRQTLSNKPMRQQLVKEVQQQLDELVKVQLPSYMVPQSIQVLNQLPINQNGKVDRKALIQRTRTQTEVSQGGLQRELSTAELKVQRILSRVLGIEASRMGLEDSFFQLGGDSIAAMKIVAAAREEEIHLTIANIFQHPKLVNLATVAQFSQHEGEQKSIQPFSLLSTTQRDYLLHAIPENTSNVNGNDIIDILPTTWMQNLFISRGVNIQPLAFNYFFLNLGTRVDASRLRSSIPTLVQQFSILRTKFVYVDGVLWQTVLRKPHVPFTEFHLDMSLEEAADTVCLEDSRTTDPLELATAFMLIRGTSNEHLLAIRITHAQYDGVCFPSFVKALFAIYSGKSVEPAHNHSTYLAYTRERKSVSALHWRDVLHGSRMTKATPLLSPSIRHGMIPVEVQTESIIGMPHVPTGLTLASLVSAAWAKVLSQITGEEDVVYGYMVAGRNANIPAITKIVGPCLNIIPVRARLHAKTTSTELIRSIQEQYIALGEADSMGFDEIVRTSTDWPADTEYDSVFQHQNLNEHPEFDFEGTSSRLHWFQNPDSVPCILTVVSYPLEDGLRIVVRGNEHIITPESAERINKLLCETIGALSSSLQ</sequence>
<name>TES_ALTAL</name>
<proteinExistence type="inferred from homology"/>
<keyword id="KW-0413">Isomerase</keyword>
<keyword id="KW-0436">Ligase</keyword>
<keyword id="KW-0596">Phosphopantetheine</keyword>
<keyword id="KW-0597">Phosphoprotein</keyword>
<keyword id="KW-0677">Repeat</keyword>
<keyword id="KW-0843">Virulence</keyword>